<name>DEF_HELAH</name>
<organism>
    <name type="scientific">Helicobacter acinonychis (strain Sheeba)</name>
    <dbReference type="NCBI Taxonomy" id="382638"/>
    <lineage>
        <taxon>Bacteria</taxon>
        <taxon>Pseudomonadati</taxon>
        <taxon>Campylobacterota</taxon>
        <taxon>Epsilonproteobacteria</taxon>
        <taxon>Campylobacterales</taxon>
        <taxon>Helicobacteraceae</taxon>
        <taxon>Helicobacter</taxon>
    </lineage>
</organism>
<reference key="1">
    <citation type="journal article" date="2006" name="PLoS Genet.">
        <title>Who ate whom? Adaptive Helicobacter genomic changes that accompanied a host jump from early humans to large felines.</title>
        <authorList>
            <person name="Eppinger M."/>
            <person name="Baar C."/>
            <person name="Linz B."/>
            <person name="Raddatz G."/>
            <person name="Lanz C."/>
            <person name="Keller H."/>
            <person name="Morelli G."/>
            <person name="Gressmann H."/>
            <person name="Achtman M."/>
            <person name="Schuster S.C."/>
        </authorList>
    </citation>
    <scope>NUCLEOTIDE SEQUENCE [LARGE SCALE GENOMIC DNA]</scope>
    <source>
        <strain>Sheeba</strain>
    </source>
</reference>
<keyword id="KW-0378">Hydrolase</keyword>
<keyword id="KW-0408">Iron</keyword>
<keyword id="KW-0479">Metal-binding</keyword>
<keyword id="KW-0648">Protein biosynthesis</keyword>
<protein>
    <recommendedName>
        <fullName evidence="1">Peptide deformylase</fullName>
        <shortName evidence="1">PDF</shortName>
        <ecNumber evidence="1">3.5.1.88</ecNumber>
    </recommendedName>
    <alternativeName>
        <fullName evidence="1">Polypeptide deformylase</fullName>
    </alternativeName>
</protein>
<evidence type="ECO:0000255" key="1">
    <source>
        <dbReference type="HAMAP-Rule" id="MF_00163"/>
    </source>
</evidence>
<feature type="chain" id="PRO_0000301038" description="Peptide deformylase">
    <location>
        <begin position="1"/>
        <end position="175"/>
    </location>
</feature>
<feature type="active site" evidence="1">
    <location>
        <position position="139"/>
    </location>
</feature>
<feature type="binding site" evidence="1">
    <location>
        <position position="96"/>
    </location>
    <ligand>
        <name>Fe cation</name>
        <dbReference type="ChEBI" id="CHEBI:24875"/>
    </ligand>
</feature>
<feature type="binding site" evidence="1">
    <location>
        <position position="138"/>
    </location>
    <ligand>
        <name>Fe cation</name>
        <dbReference type="ChEBI" id="CHEBI:24875"/>
    </ligand>
</feature>
<feature type="binding site" evidence="1">
    <location>
        <position position="142"/>
    </location>
    <ligand>
        <name>Fe cation</name>
        <dbReference type="ChEBI" id="CHEBI:24875"/>
    </ligand>
</feature>
<accession>Q17XD4</accession>
<proteinExistence type="inferred from homology"/>
<dbReference type="EC" id="3.5.1.88" evidence="1"/>
<dbReference type="EMBL" id="AM260522">
    <property type="protein sequence ID" value="CAJ99692.1"/>
    <property type="molecule type" value="Genomic_DNA"/>
</dbReference>
<dbReference type="RefSeq" id="WP_011577804.1">
    <property type="nucleotide sequence ID" value="NC_008229.1"/>
</dbReference>
<dbReference type="SMR" id="Q17XD4"/>
<dbReference type="STRING" id="382638.Hac_0915"/>
<dbReference type="GeneID" id="31758313"/>
<dbReference type="KEGG" id="hac:Hac_0915"/>
<dbReference type="eggNOG" id="COG0242">
    <property type="taxonomic scope" value="Bacteria"/>
</dbReference>
<dbReference type="HOGENOM" id="CLU_061901_2_0_7"/>
<dbReference type="OrthoDB" id="9804313at2"/>
<dbReference type="BioCyc" id="HACI382638:HAC_RS03930-MONOMER"/>
<dbReference type="Proteomes" id="UP000000775">
    <property type="component" value="Chromosome"/>
</dbReference>
<dbReference type="GO" id="GO:0046872">
    <property type="term" value="F:metal ion binding"/>
    <property type="evidence" value="ECO:0007669"/>
    <property type="project" value="UniProtKB-KW"/>
</dbReference>
<dbReference type="GO" id="GO:0042586">
    <property type="term" value="F:peptide deformylase activity"/>
    <property type="evidence" value="ECO:0007669"/>
    <property type="project" value="UniProtKB-UniRule"/>
</dbReference>
<dbReference type="GO" id="GO:0043686">
    <property type="term" value="P:co-translational protein modification"/>
    <property type="evidence" value="ECO:0007669"/>
    <property type="project" value="TreeGrafter"/>
</dbReference>
<dbReference type="GO" id="GO:0006412">
    <property type="term" value="P:translation"/>
    <property type="evidence" value="ECO:0007669"/>
    <property type="project" value="UniProtKB-UniRule"/>
</dbReference>
<dbReference type="CDD" id="cd00487">
    <property type="entry name" value="Pep_deformylase"/>
    <property type="match status" value="1"/>
</dbReference>
<dbReference type="FunFam" id="3.90.45.10:FF:000008">
    <property type="entry name" value="Peptide deformylase"/>
    <property type="match status" value="1"/>
</dbReference>
<dbReference type="Gene3D" id="3.90.45.10">
    <property type="entry name" value="Peptide deformylase"/>
    <property type="match status" value="1"/>
</dbReference>
<dbReference type="HAMAP" id="MF_00163">
    <property type="entry name" value="Pep_deformylase"/>
    <property type="match status" value="1"/>
</dbReference>
<dbReference type="InterPro" id="IPR023635">
    <property type="entry name" value="Peptide_deformylase"/>
</dbReference>
<dbReference type="InterPro" id="IPR036821">
    <property type="entry name" value="Peptide_deformylase_sf"/>
</dbReference>
<dbReference type="NCBIfam" id="TIGR00079">
    <property type="entry name" value="pept_deformyl"/>
    <property type="match status" value="1"/>
</dbReference>
<dbReference type="NCBIfam" id="NF001159">
    <property type="entry name" value="PRK00150.1-3"/>
    <property type="match status" value="1"/>
</dbReference>
<dbReference type="PANTHER" id="PTHR10458">
    <property type="entry name" value="PEPTIDE DEFORMYLASE"/>
    <property type="match status" value="1"/>
</dbReference>
<dbReference type="PANTHER" id="PTHR10458:SF22">
    <property type="entry name" value="PEPTIDE DEFORMYLASE"/>
    <property type="match status" value="1"/>
</dbReference>
<dbReference type="Pfam" id="PF01327">
    <property type="entry name" value="Pep_deformylase"/>
    <property type="match status" value="1"/>
</dbReference>
<dbReference type="PIRSF" id="PIRSF004749">
    <property type="entry name" value="Pep_def"/>
    <property type="match status" value="1"/>
</dbReference>
<dbReference type="PRINTS" id="PR01576">
    <property type="entry name" value="PDEFORMYLASE"/>
</dbReference>
<dbReference type="SUPFAM" id="SSF56420">
    <property type="entry name" value="Peptide deformylase"/>
    <property type="match status" value="1"/>
</dbReference>
<comment type="function">
    <text evidence="1">Removes the formyl group from the N-terminal Met of newly synthesized proteins. Requires at least a dipeptide for an efficient rate of reaction. N-terminal L-methionine is a prerequisite for activity but the enzyme has broad specificity at other positions.</text>
</comment>
<comment type="catalytic activity">
    <reaction evidence="1">
        <text>N-terminal N-formyl-L-methionyl-[peptide] + H2O = N-terminal L-methionyl-[peptide] + formate</text>
        <dbReference type="Rhea" id="RHEA:24420"/>
        <dbReference type="Rhea" id="RHEA-COMP:10639"/>
        <dbReference type="Rhea" id="RHEA-COMP:10640"/>
        <dbReference type="ChEBI" id="CHEBI:15377"/>
        <dbReference type="ChEBI" id="CHEBI:15740"/>
        <dbReference type="ChEBI" id="CHEBI:49298"/>
        <dbReference type="ChEBI" id="CHEBI:64731"/>
        <dbReference type="EC" id="3.5.1.88"/>
    </reaction>
</comment>
<comment type="cofactor">
    <cofactor evidence="1">
        <name>Fe(2+)</name>
        <dbReference type="ChEBI" id="CHEBI:29033"/>
    </cofactor>
    <text evidence="1">Binds 1 Fe(2+) ion.</text>
</comment>
<comment type="similarity">
    <text evidence="1">Belongs to the polypeptide deformylase family.</text>
</comment>
<sequence length="175" mass="20116">MALLEIIHYPSKILRTISKEVVSFDAKFHQQLDDMHETMIASEGIGLAAIQVGLPLRMLLINLPREDGVQHKEDCLEIINPKFIETKGSIMFKEGCLSVPGFYEEVERFEKVKIEYQNRFAKVKVLEASELLAVAIQHEIDHLNGVLFVDKLSILKRKKFEKELKELNKNPKNKS</sequence>
<gene>
    <name evidence="1" type="primary">def</name>
    <name type="ordered locus">Hac_0915</name>
</gene>